<organism>
    <name type="scientific">Protochlamydia amoebophila (strain UWE25)</name>
    <dbReference type="NCBI Taxonomy" id="264201"/>
    <lineage>
        <taxon>Bacteria</taxon>
        <taxon>Pseudomonadati</taxon>
        <taxon>Chlamydiota</taxon>
        <taxon>Chlamydiia</taxon>
        <taxon>Parachlamydiales</taxon>
        <taxon>Parachlamydiaceae</taxon>
        <taxon>Candidatus Protochlamydia</taxon>
    </lineage>
</organism>
<name>RS14_PARUW</name>
<proteinExistence type="inferred from homology"/>
<sequence>MAKKSSVEKQKRRERLVQLKWDKRKELREKSYNINLSEEEREQARIALNKMPRDSSPIRLRNRCQMTGRARGFMRKFKLSRLTFRELASMGMIPGVTKSSW</sequence>
<accession>Q6MAR9</accession>
<keyword id="KW-1185">Reference proteome</keyword>
<keyword id="KW-0687">Ribonucleoprotein</keyword>
<keyword id="KW-0689">Ribosomal protein</keyword>
<keyword id="KW-0694">RNA-binding</keyword>
<keyword id="KW-0699">rRNA-binding</keyword>
<dbReference type="EMBL" id="BX908798">
    <property type="protein sequence ID" value="CAF24330.1"/>
    <property type="molecule type" value="Genomic_DNA"/>
</dbReference>
<dbReference type="RefSeq" id="WP_011176152.1">
    <property type="nucleotide sequence ID" value="NC_005861.2"/>
</dbReference>
<dbReference type="SMR" id="Q6MAR9"/>
<dbReference type="STRING" id="264201.pc1606"/>
<dbReference type="KEGG" id="pcu:PC_RS07695"/>
<dbReference type="eggNOG" id="COG0199">
    <property type="taxonomic scope" value="Bacteria"/>
</dbReference>
<dbReference type="HOGENOM" id="CLU_139869_0_1_0"/>
<dbReference type="OrthoDB" id="9810484at2"/>
<dbReference type="Proteomes" id="UP000000529">
    <property type="component" value="Chromosome"/>
</dbReference>
<dbReference type="GO" id="GO:0005737">
    <property type="term" value="C:cytoplasm"/>
    <property type="evidence" value="ECO:0007669"/>
    <property type="project" value="UniProtKB-ARBA"/>
</dbReference>
<dbReference type="GO" id="GO:0015935">
    <property type="term" value="C:small ribosomal subunit"/>
    <property type="evidence" value="ECO:0007669"/>
    <property type="project" value="TreeGrafter"/>
</dbReference>
<dbReference type="GO" id="GO:0019843">
    <property type="term" value="F:rRNA binding"/>
    <property type="evidence" value="ECO:0007669"/>
    <property type="project" value="UniProtKB-UniRule"/>
</dbReference>
<dbReference type="GO" id="GO:0003735">
    <property type="term" value="F:structural constituent of ribosome"/>
    <property type="evidence" value="ECO:0007669"/>
    <property type="project" value="InterPro"/>
</dbReference>
<dbReference type="GO" id="GO:0006412">
    <property type="term" value="P:translation"/>
    <property type="evidence" value="ECO:0007669"/>
    <property type="project" value="UniProtKB-UniRule"/>
</dbReference>
<dbReference type="FunFam" id="1.10.287.1480:FF:000001">
    <property type="entry name" value="30S ribosomal protein S14"/>
    <property type="match status" value="1"/>
</dbReference>
<dbReference type="Gene3D" id="1.10.287.1480">
    <property type="match status" value="1"/>
</dbReference>
<dbReference type="HAMAP" id="MF_00537">
    <property type="entry name" value="Ribosomal_uS14_1"/>
    <property type="match status" value="1"/>
</dbReference>
<dbReference type="InterPro" id="IPR001209">
    <property type="entry name" value="Ribosomal_uS14"/>
</dbReference>
<dbReference type="InterPro" id="IPR023036">
    <property type="entry name" value="Ribosomal_uS14_bac/plastid"/>
</dbReference>
<dbReference type="InterPro" id="IPR018271">
    <property type="entry name" value="Ribosomal_uS14_CS"/>
</dbReference>
<dbReference type="NCBIfam" id="NF006477">
    <property type="entry name" value="PRK08881.1"/>
    <property type="match status" value="1"/>
</dbReference>
<dbReference type="PANTHER" id="PTHR19836">
    <property type="entry name" value="30S RIBOSOMAL PROTEIN S14"/>
    <property type="match status" value="1"/>
</dbReference>
<dbReference type="PANTHER" id="PTHR19836:SF19">
    <property type="entry name" value="SMALL RIBOSOMAL SUBUNIT PROTEIN US14M"/>
    <property type="match status" value="1"/>
</dbReference>
<dbReference type="Pfam" id="PF00253">
    <property type="entry name" value="Ribosomal_S14"/>
    <property type="match status" value="1"/>
</dbReference>
<dbReference type="SUPFAM" id="SSF57716">
    <property type="entry name" value="Glucocorticoid receptor-like (DNA-binding domain)"/>
    <property type="match status" value="1"/>
</dbReference>
<dbReference type="PROSITE" id="PS00527">
    <property type="entry name" value="RIBOSOMAL_S14"/>
    <property type="match status" value="1"/>
</dbReference>
<evidence type="ECO:0000255" key="1">
    <source>
        <dbReference type="HAMAP-Rule" id="MF_00537"/>
    </source>
</evidence>
<evidence type="ECO:0000305" key="2"/>
<gene>
    <name evidence="1" type="primary">rpsN</name>
    <name type="ordered locus">pc1606</name>
</gene>
<protein>
    <recommendedName>
        <fullName evidence="1">Small ribosomal subunit protein uS14</fullName>
    </recommendedName>
    <alternativeName>
        <fullName evidence="2">30S ribosomal protein S14</fullName>
    </alternativeName>
</protein>
<reference key="1">
    <citation type="journal article" date="2004" name="Science">
        <title>Illuminating the evolutionary history of chlamydiae.</title>
        <authorList>
            <person name="Horn M."/>
            <person name="Collingro A."/>
            <person name="Schmitz-Esser S."/>
            <person name="Beier C.L."/>
            <person name="Purkhold U."/>
            <person name="Fartmann B."/>
            <person name="Brandt P."/>
            <person name="Nyakatura G.J."/>
            <person name="Droege M."/>
            <person name="Frishman D."/>
            <person name="Rattei T."/>
            <person name="Mewes H.-W."/>
            <person name="Wagner M."/>
        </authorList>
    </citation>
    <scope>NUCLEOTIDE SEQUENCE [LARGE SCALE GENOMIC DNA]</scope>
    <source>
        <strain>UWE25</strain>
    </source>
</reference>
<comment type="function">
    <text evidence="1">Binds 16S rRNA, required for the assembly of 30S particles and may also be responsible for determining the conformation of the 16S rRNA at the A site.</text>
</comment>
<comment type="subunit">
    <text evidence="1">Part of the 30S ribosomal subunit. Contacts proteins S3 and S10.</text>
</comment>
<comment type="similarity">
    <text evidence="1">Belongs to the universal ribosomal protein uS14 family.</text>
</comment>
<feature type="chain" id="PRO_1000128481" description="Small ribosomal subunit protein uS14">
    <location>
        <begin position="1"/>
        <end position="101"/>
    </location>
</feature>